<reference key="1">
    <citation type="submission" date="2006-10" db="EMBL/GenBank/DDBJ databases">
        <title>Complete sequence of chromosome of Pelobacter propionicus DSM 2379.</title>
        <authorList>
            <consortium name="US DOE Joint Genome Institute"/>
            <person name="Copeland A."/>
            <person name="Lucas S."/>
            <person name="Lapidus A."/>
            <person name="Barry K."/>
            <person name="Detter J.C."/>
            <person name="Glavina del Rio T."/>
            <person name="Hammon N."/>
            <person name="Israni S."/>
            <person name="Dalin E."/>
            <person name="Tice H."/>
            <person name="Pitluck S."/>
            <person name="Saunders E."/>
            <person name="Brettin T."/>
            <person name="Bruce D."/>
            <person name="Han C."/>
            <person name="Tapia R."/>
            <person name="Schmutz J."/>
            <person name="Larimer F."/>
            <person name="Land M."/>
            <person name="Hauser L."/>
            <person name="Kyrpides N."/>
            <person name="Kim E."/>
            <person name="Lovley D."/>
            <person name="Richardson P."/>
        </authorList>
    </citation>
    <scope>NUCLEOTIDE SEQUENCE [LARGE SCALE GENOMIC DNA]</scope>
    <source>
        <strain>DSM 2379 / NBRC 103807 / OttBd1</strain>
    </source>
</reference>
<gene>
    <name evidence="1" type="primary">bioF</name>
    <name type="ordered locus">Ppro_2093</name>
</gene>
<keyword id="KW-0093">Biotin biosynthesis</keyword>
<keyword id="KW-0663">Pyridoxal phosphate</keyword>
<keyword id="KW-1185">Reference proteome</keyword>
<keyword id="KW-0808">Transferase</keyword>
<proteinExistence type="inferred from homology"/>
<comment type="function">
    <text evidence="1">Catalyzes the decarboxylative condensation of pimeloyl-[acyl-carrier protein] and L-alanine to produce 8-amino-7-oxononanoate (AON), [acyl-carrier protein], and carbon dioxide.</text>
</comment>
<comment type="catalytic activity">
    <reaction evidence="1">
        <text>6-carboxyhexanoyl-[ACP] + L-alanine + H(+) = (8S)-8-amino-7-oxononanoate + holo-[ACP] + CO2</text>
        <dbReference type="Rhea" id="RHEA:42288"/>
        <dbReference type="Rhea" id="RHEA-COMP:9685"/>
        <dbReference type="Rhea" id="RHEA-COMP:9955"/>
        <dbReference type="ChEBI" id="CHEBI:15378"/>
        <dbReference type="ChEBI" id="CHEBI:16526"/>
        <dbReference type="ChEBI" id="CHEBI:57972"/>
        <dbReference type="ChEBI" id="CHEBI:64479"/>
        <dbReference type="ChEBI" id="CHEBI:78846"/>
        <dbReference type="ChEBI" id="CHEBI:149468"/>
        <dbReference type="EC" id="2.3.1.47"/>
    </reaction>
</comment>
<comment type="cofactor">
    <cofactor evidence="1">
        <name>pyridoxal 5'-phosphate</name>
        <dbReference type="ChEBI" id="CHEBI:597326"/>
    </cofactor>
</comment>
<comment type="pathway">
    <text evidence="1">Cofactor biosynthesis; biotin biosynthesis.</text>
</comment>
<comment type="subunit">
    <text evidence="1">Homodimer.</text>
</comment>
<comment type="similarity">
    <text evidence="1">Belongs to the class-II pyridoxal-phosphate-dependent aminotransferase family. BioF subfamily.</text>
</comment>
<evidence type="ECO:0000255" key="1">
    <source>
        <dbReference type="HAMAP-Rule" id="MF_01693"/>
    </source>
</evidence>
<dbReference type="EC" id="2.3.1.47" evidence="1"/>
<dbReference type="EMBL" id="CP000482">
    <property type="protein sequence ID" value="ABK99701.1"/>
    <property type="molecule type" value="Genomic_DNA"/>
</dbReference>
<dbReference type="RefSeq" id="WP_011735967.1">
    <property type="nucleotide sequence ID" value="NC_008609.1"/>
</dbReference>
<dbReference type="SMR" id="A1AQT1"/>
<dbReference type="STRING" id="338966.Ppro_2093"/>
<dbReference type="KEGG" id="ppd:Ppro_2093"/>
<dbReference type="eggNOG" id="COG0156">
    <property type="taxonomic scope" value="Bacteria"/>
</dbReference>
<dbReference type="HOGENOM" id="CLU_015846_11_0_7"/>
<dbReference type="OrthoDB" id="9807157at2"/>
<dbReference type="UniPathway" id="UPA00078"/>
<dbReference type="Proteomes" id="UP000006732">
    <property type="component" value="Chromosome"/>
</dbReference>
<dbReference type="GO" id="GO:0008710">
    <property type="term" value="F:8-amino-7-oxononanoate synthase activity"/>
    <property type="evidence" value="ECO:0007669"/>
    <property type="project" value="UniProtKB-EC"/>
</dbReference>
<dbReference type="GO" id="GO:0030170">
    <property type="term" value="F:pyridoxal phosphate binding"/>
    <property type="evidence" value="ECO:0007669"/>
    <property type="project" value="InterPro"/>
</dbReference>
<dbReference type="GO" id="GO:0009102">
    <property type="term" value="P:biotin biosynthetic process"/>
    <property type="evidence" value="ECO:0007669"/>
    <property type="project" value="UniProtKB-UniPathway"/>
</dbReference>
<dbReference type="CDD" id="cd06454">
    <property type="entry name" value="KBL_like"/>
    <property type="match status" value="1"/>
</dbReference>
<dbReference type="Gene3D" id="3.90.1150.10">
    <property type="entry name" value="Aspartate Aminotransferase, domain 1"/>
    <property type="match status" value="1"/>
</dbReference>
<dbReference type="Gene3D" id="3.40.640.10">
    <property type="entry name" value="Type I PLP-dependent aspartate aminotransferase-like (Major domain)"/>
    <property type="match status" value="1"/>
</dbReference>
<dbReference type="HAMAP" id="MF_01693">
    <property type="entry name" value="BioF_aminotrans_2"/>
    <property type="match status" value="1"/>
</dbReference>
<dbReference type="InterPro" id="IPR001917">
    <property type="entry name" value="Aminotrans_II_pyridoxalP_BS"/>
</dbReference>
<dbReference type="InterPro" id="IPR004839">
    <property type="entry name" value="Aminotransferase_I/II_large"/>
</dbReference>
<dbReference type="InterPro" id="IPR050087">
    <property type="entry name" value="AON_synthase_class-II"/>
</dbReference>
<dbReference type="InterPro" id="IPR004723">
    <property type="entry name" value="AONS_Archaea/Proteobacteria"/>
</dbReference>
<dbReference type="InterPro" id="IPR022834">
    <property type="entry name" value="AONS_Proteobacteria"/>
</dbReference>
<dbReference type="InterPro" id="IPR015424">
    <property type="entry name" value="PyrdxlP-dep_Trfase"/>
</dbReference>
<dbReference type="InterPro" id="IPR015421">
    <property type="entry name" value="PyrdxlP-dep_Trfase_major"/>
</dbReference>
<dbReference type="InterPro" id="IPR015422">
    <property type="entry name" value="PyrdxlP-dep_Trfase_small"/>
</dbReference>
<dbReference type="NCBIfam" id="TIGR00858">
    <property type="entry name" value="bioF"/>
    <property type="match status" value="1"/>
</dbReference>
<dbReference type="PANTHER" id="PTHR13693:SF100">
    <property type="entry name" value="8-AMINO-7-OXONONANOATE SYNTHASE"/>
    <property type="match status" value="1"/>
</dbReference>
<dbReference type="PANTHER" id="PTHR13693">
    <property type="entry name" value="CLASS II AMINOTRANSFERASE/8-AMINO-7-OXONONANOATE SYNTHASE"/>
    <property type="match status" value="1"/>
</dbReference>
<dbReference type="Pfam" id="PF00155">
    <property type="entry name" value="Aminotran_1_2"/>
    <property type="match status" value="1"/>
</dbReference>
<dbReference type="SUPFAM" id="SSF53383">
    <property type="entry name" value="PLP-dependent transferases"/>
    <property type="match status" value="1"/>
</dbReference>
<dbReference type="PROSITE" id="PS00599">
    <property type="entry name" value="AA_TRANSFER_CLASS_2"/>
    <property type="match status" value="1"/>
</dbReference>
<name>BIOF_PELPD</name>
<sequence>MGRTVQDELEQIRAKGLFRSTRLIQGRQSARVTMEGRQLLLLCSNNYLGLAEHPALIAASMAAAEQFGSSSGASRLVSGSMEPHEALETAVAAFKRTESALAFNSGYAANTGIIQALVGRGDVIFCDRLNHASIIDGALLSGARLVRYPHNDAVALAGLMEKQRGTGRCLIVSDGVFSMDGDLAPLAELAELRRRHDALLMVDDAHGCGVLGEQGRGSAELLGVLSHIDIHVGTFGKALGSFGAYAALSRELRDLLVNRARSFIFSTSLPPAVLAVSTAALELVQAAEGDELRKRLRDNTSLFRGLLRDAGFFLGEGNTQIVPILTGGAEETMDFSRQLLEEGMFVQGIRPPTVPAGACRLRCTVMATHSPQDLTWAAERITHIGRRLGVV</sequence>
<organism>
    <name type="scientific">Pelobacter propionicus (strain DSM 2379 / NBRC 103807 / OttBd1)</name>
    <dbReference type="NCBI Taxonomy" id="338966"/>
    <lineage>
        <taxon>Bacteria</taxon>
        <taxon>Pseudomonadati</taxon>
        <taxon>Thermodesulfobacteriota</taxon>
        <taxon>Desulfuromonadia</taxon>
        <taxon>Desulfuromonadales</taxon>
        <taxon>Desulfuromonadaceae</taxon>
        <taxon>Pelobacter</taxon>
    </lineage>
</organism>
<protein>
    <recommendedName>
        <fullName evidence="1">8-amino-7-oxononanoate synthase</fullName>
        <shortName evidence="1">AONS</shortName>
        <ecNumber evidence="1">2.3.1.47</ecNumber>
    </recommendedName>
    <alternativeName>
        <fullName evidence="1">7-keto-8-amino-pelargonic acid synthase</fullName>
        <shortName evidence="1">7-KAP synthase</shortName>
        <shortName evidence="1">KAPA synthase</shortName>
    </alternativeName>
    <alternativeName>
        <fullName evidence="1">8-amino-7-ketopelargonate synthase</fullName>
    </alternativeName>
</protein>
<accession>A1AQT1</accession>
<feature type="chain" id="PRO_0000381062" description="8-amino-7-oxononanoate synthase">
    <location>
        <begin position="1"/>
        <end position="391"/>
    </location>
</feature>
<feature type="binding site" evidence="1">
    <location>
        <position position="19"/>
    </location>
    <ligand>
        <name>substrate</name>
    </ligand>
</feature>
<feature type="binding site" evidence="1">
    <location>
        <begin position="106"/>
        <end position="107"/>
    </location>
    <ligand>
        <name>pyridoxal 5'-phosphate</name>
        <dbReference type="ChEBI" id="CHEBI:597326"/>
    </ligand>
</feature>
<feature type="binding site" evidence="1">
    <location>
        <position position="131"/>
    </location>
    <ligand>
        <name>substrate</name>
    </ligand>
</feature>
<feature type="binding site" evidence="1">
    <location>
        <position position="178"/>
    </location>
    <ligand>
        <name>pyridoxal 5'-phosphate</name>
        <dbReference type="ChEBI" id="CHEBI:597326"/>
    </ligand>
</feature>
<feature type="binding site" evidence="1">
    <location>
        <position position="206"/>
    </location>
    <ligand>
        <name>pyridoxal 5'-phosphate</name>
        <dbReference type="ChEBI" id="CHEBI:597326"/>
    </ligand>
</feature>
<feature type="binding site" evidence="1">
    <location>
        <position position="234"/>
    </location>
    <ligand>
        <name>pyridoxal 5'-phosphate</name>
        <dbReference type="ChEBI" id="CHEBI:597326"/>
    </ligand>
</feature>
<feature type="binding site" evidence="1">
    <location>
        <position position="353"/>
    </location>
    <ligand>
        <name>substrate</name>
    </ligand>
</feature>
<feature type="modified residue" description="N6-(pyridoxal phosphate)lysine" evidence="1">
    <location>
        <position position="237"/>
    </location>
</feature>